<comment type="function">
    <text evidence="2 4">Cleaves asparagine-linked oligomannose and hybrid, but not complex, oligosaccharides from glycoproteins.</text>
</comment>
<comment type="catalytic activity">
    <reaction>
        <text>an N(4)-(oligosaccharide-(1-&gt;3)-[oligosaccharide-(1-&gt;6)]-beta-D-Man-(1-&gt;4)-beta-D-GlcNAc-(1-&gt;4)-alpha-D-GlcNAc)-L-asparaginyl-[protein] + H2O = an oligosaccharide-(1-&gt;3)-[oligosaccharide-(1-&gt;6)]-beta-D-Man-(1-&gt;4)-D-GlcNAc + N(4)-(N-acetyl-beta-D-glucosaminyl)-L-asparaginyl-[protein]</text>
        <dbReference type="Rhea" id="RHEA:73067"/>
        <dbReference type="Rhea" id="RHEA-COMP:12603"/>
        <dbReference type="Rhea" id="RHEA-COMP:18176"/>
        <dbReference type="ChEBI" id="CHEBI:15377"/>
        <dbReference type="ChEBI" id="CHEBI:132248"/>
        <dbReference type="ChEBI" id="CHEBI:192714"/>
        <dbReference type="ChEBI" id="CHEBI:192715"/>
        <dbReference type="EC" id="3.2.1.96"/>
    </reaction>
</comment>
<comment type="similarity">
    <text evidence="5">Belongs to the glycosyl hydrolase 18 family.</text>
</comment>
<feature type="signal peptide" description="Or 44" evidence="3">
    <location>
        <begin position="1"/>
        <end position="42"/>
    </location>
</feature>
<feature type="chain" id="PRO_0000011958" description="Endo-beta-N-acetylglucosaminidase H">
    <location>
        <begin position="43"/>
        <end position="313"/>
    </location>
</feature>
<feature type="domain" description="GH18" evidence="1">
    <location>
        <begin position="51"/>
        <end position="307"/>
    </location>
</feature>
<feature type="active site" description="Proton donor" evidence="1 6">
    <location>
        <position position="174"/>
    </location>
</feature>
<feature type="mutagenesis site" description="2% activity." evidence="2">
    <original>D</original>
    <variation>A</variation>
    <variation>E</variation>
    <location>
        <position position="172"/>
    </location>
</feature>
<feature type="mutagenesis site" description="0.1% activity." evidence="2">
    <original>D</original>
    <variation>N</variation>
    <location>
        <position position="172"/>
    </location>
</feature>
<feature type="mutagenesis site" description="Loss of activity." evidence="2">
    <original>E</original>
    <variation>A</variation>
    <location>
        <position position="174"/>
    </location>
</feature>
<feature type="mutagenesis site" description="0.05% activity." evidence="2">
    <original>E</original>
    <variation>D</variation>
    <variation>Q</variation>
    <location>
        <position position="174"/>
    </location>
</feature>
<feature type="strand" evidence="9">
    <location>
        <begin position="52"/>
        <end position="58"/>
    </location>
</feature>
<feature type="turn" evidence="9">
    <location>
        <begin position="59"/>
        <end position="61"/>
    </location>
</feature>
<feature type="helix" evidence="9">
    <location>
        <begin position="64"/>
        <end position="69"/>
    </location>
</feature>
<feature type="strand" evidence="9">
    <location>
        <begin position="70"/>
        <end position="72"/>
    </location>
</feature>
<feature type="turn" evidence="9">
    <location>
        <begin position="73"/>
        <end position="75"/>
    </location>
</feature>
<feature type="strand" evidence="9">
    <location>
        <begin position="77"/>
        <end position="79"/>
    </location>
</feature>
<feature type="strand" evidence="9">
    <location>
        <begin position="81"/>
        <end position="93"/>
    </location>
</feature>
<feature type="turn" evidence="9">
    <location>
        <begin position="94"/>
        <end position="97"/>
    </location>
</feature>
<feature type="strand" evidence="9">
    <location>
        <begin position="98"/>
        <end position="102"/>
    </location>
</feature>
<feature type="helix" evidence="9">
    <location>
        <begin position="105"/>
        <end position="112"/>
    </location>
</feature>
<feature type="helix" evidence="9">
    <location>
        <begin position="114"/>
        <end position="117"/>
    </location>
</feature>
<feature type="helix" evidence="9">
    <location>
        <begin position="119"/>
        <end position="123"/>
    </location>
</feature>
<feature type="strand" evidence="9">
    <location>
        <begin position="127"/>
        <end position="134"/>
    </location>
</feature>
<feature type="strand" evidence="7">
    <location>
        <begin position="136"/>
        <end position="138"/>
    </location>
</feature>
<feature type="helix" evidence="9">
    <location>
        <begin position="147"/>
        <end position="164"/>
    </location>
</feature>
<feature type="strand" evidence="9">
    <location>
        <begin position="168"/>
        <end position="172"/>
    </location>
</feature>
<feature type="helix" evidence="9">
    <location>
        <begin position="180"/>
        <end position="182"/>
    </location>
</feature>
<feature type="helix" evidence="9">
    <location>
        <begin position="190"/>
        <end position="201"/>
    </location>
</feature>
<feature type="strand" evidence="9">
    <location>
        <begin position="205"/>
        <end position="211"/>
    </location>
</feature>
<feature type="helix" evidence="9">
    <location>
        <begin position="213"/>
        <end position="216"/>
    </location>
</feature>
<feature type="helix" evidence="9">
    <location>
        <begin position="227"/>
        <end position="229"/>
    </location>
</feature>
<feature type="strand" evidence="9">
    <location>
        <begin position="231"/>
        <end position="234"/>
    </location>
</feature>
<feature type="strand" evidence="8">
    <location>
        <begin position="246"/>
        <end position="248"/>
    </location>
</feature>
<feature type="helix" evidence="9">
    <location>
        <begin position="250"/>
        <end position="252"/>
    </location>
</feature>
<feature type="strand" evidence="9">
    <location>
        <begin position="256"/>
        <end position="259"/>
    </location>
</feature>
<feature type="turn" evidence="9">
    <location>
        <begin position="260"/>
        <end position="262"/>
    </location>
</feature>
<feature type="helix" evidence="9">
    <location>
        <begin position="265"/>
        <end position="277"/>
    </location>
</feature>
<feature type="strand" evidence="9">
    <location>
        <begin position="282"/>
        <end position="286"/>
    </location>
</feature>
<feature type="helix" evidence="9">
    <location>
        <begin position="294"/>
        <end position="305"/>
    </location>
</feature>
<feature type="strand" evidence="9">
    <location>
        <begin position="309"/>
        <end position="311"/>
    </location>
</feature>
<organism>
    <name type="scientific">Streptomyces plicatus</name>
    <dbReference type="NCBI Taxonomy" id="1922"/>
    <lineage>
        <taxon>Bacteria</taxon>
        <taxon>Bacillati</taxon>
        <taxon>Actinomycetota</taxon>
        <taxon>Actinomycetes</taxon>
        <taxon>Kitasatosporales</taxon>
        <taxon>Streptomycetaceae</taxon>
        <taxon>Streptomyces</taxon>
        <taxon>Streptomyces rochei group</taxon>
    </lineage>
</organism>
<reference key="1">
    <citation type="journal article" date="1984" name="J. Biol. Chem.">
        <title>Primary structure of the Streptomyces enzyme endo-beta-N-acetylglucosaminidase H.</title>
        <authorList>
            <person name="Robbins P.W."/>
            <person name="Trimble R.B."/>
            <person name="Wirth D.F."/>
            <person name="Hering C."/>
            <person name="Maley F."/>
            <person name="Maley G.F."/>
            <person name="Das R."/>
            <person name="Gibson B.W."/>
            <person name="Royal N."/>
            <person name="Biemann K."/>
        </authorList>
    </citation>
    <scope>NUCLEOTIDE SEQUENCE [GENOMIC DNA]</scope>
    <scope>PARTIAL PROTEIN SEQUENCE</scope>
</reference>
<reference key="2">
    <citation type="journal article" date="1995" name="Structure">
        <title>Crystal structure of endo-beta-N-acetylglucosaminidase H at 1.9-A resolution: active-site geometry and substrate recognition.</title>
        <authorList>
            <person name="Rao V."/>
            <person name="Guan C."/>
            <person name="Van Roey P."/>
        </authorList>
    </citation>
    <scope>X-RAY CRYSTALLOGRAPHY (1.9 ANGSTROMS) OF 43-313</scope>
    <scope>FUNCTION</scope>
</reference>
<reference key="3">
    <citation type="journal article" date="1999" name="Protein Sci.">
        <title>Mutations of endo-beta-N-acetylglucosaminidase H active site residue Assp130 and Glu132: activities and conformations.</title>
        <authorList>
            <person name="Rao V."/>
            <person name="Cui T."/>
            <person name="Guan C."/>
            <person name="Van Roey P."/>
        </authorList>
    </citation>
    <scope>X-RAY CRYSTALLOGRAPHY (2.1 ANGSTROMS) OF 48-312 OF MUTANTS</scope>
    <scope>FUNCTION</scope>
    <scope>PROBABLE ACTIVE SITE</scope>
    <scope>MUTAGENESIS OF ASP-172 AND GLU-174</scope>
</reference>
<sequence length="313" mass="33052">MFTPVRRRVRTAALALSAAAALVLGSTAASGASATPSPAPAPAPAPVKQGPTSVAYVEVNNNSMLNVGKYTLADGGGNAFDVAVIFAANINYDTGTKTAYLHFNENVQRVLDNAVTQIRPLQQQGIKVLLSVLGNHQGAGFANFPSQQAASAFAKQLSDAVAKYGLDGVDFDDEYAEYGNNGTAQPNDSSFVHLVTALRANMPDKIISLYNIGPAASRLSYGGVDVSDKFDYAWNPYYGTWQVPGIALPKAQLSPAAVEIGRTSRSTVADLARRTVDEGYGVYLTYNLDGGDRTADVSAFTRELYGSEAVRTP</sequence>
<name>EBAG_STRPL</name>
<dbReference type="EC" id="3.2.1.96"/>
<dbReference type="EMBL" id="K02182">
    <property type="protein sequence ID" value="AAA26738.1"/>
    <property type="molecule type" value="Genomic_DNA"/>
</dbReference>
<dbReference type="PIR" id="A00903">
    <property type="entry name" value="RBSMHP"/>
</dbReference>
<dbReference type="PDB" id="1C3F">
    <property type="method" value="X-ray"/>
    <property type="resolution" value="2.10 A"/>
    <property type="chains" value="A=48-312"/>
</dbReference>
<dbReference type="PDB" id="1C8X">
    <property type="method" value="X-ray"/>
    <property type="resolution" value="2.00 A"/>
    <property type="chains" value="A=48-312"/>
</dbReference>
<dbReference type="PDB" id="1C8Y">
    <property type="method" value="X-ray"/>
    <property type="resolution" value="2.00 A"/>
    <property type="chains" value="A=48-312"/>
</dbReference>
<dbReference type="PDB" id="1C90">
    <property type="method" value="X-ray"/>
    <property type="resolution" value="2.10 A"/>
    <property type="chains" value="A/B=48-312"/>
</dbReference>
<dbReference type="PDB" id="1C91">
    <property type="method" value="X-ray"/>
    <property type="resolution" value="2.10 A"/>
    <property type="chains" value="A=48-312"/>
</dbReference>
<dbReference type="PDB" id="1C92">
    <property type="method" value="X-ray"/>
    <property type="resolution" value="2.10 A"/>
    <property type="chains" value="A=48-312"/>
</dbReference>
<dbReference type="PDB" id="1C93">
    <property type="method" value="X-ray"/>
    <property type="resolution" value="2.10 A"/>
    <property type="chains" value="A=48-312"/>
</dbReference>
<dbReference type="PDB" id="1EDT">
    <property type="method" value="X-ray"/>
    <property type="resolution" value="1.90 A"/>
    <property type="chains" value="A=43-313"/>
</dbReference>
<dbReference type="PDB" id="6VE1">
    <property type="method" value="X-ray"/>
    <property type="resolution" value="2.10 A"/>
    <property type="chains" value="A/B/C/D=47-313"/>
</dbReference>
<dbReference type="PDBsum" id="1C3F"/>
<dbReference type="PDBsum" id="1C8X"/>
<dbReference type="PDBsum" id="1C8Y"/>
<dbReference type="PDBsum" id="1C90"/>
<dbReference type="PDBsum" id="1C91"/>
<dbReference type="PDBsum" id="1C92"/>
<dbReference type="PDBsum" id="1C93"/>
<dbReference type="PDBsum" id="1EDT"/>
<dbReference type="PDBsum" id="6VE1"/>
<dbReference type="SASBDB" id="P04067"/>
<dbReference type="SMR" id="P04067"/>
<dbReference type="CAZy" id="GH18">
    <property type="family name" value="Glycoside Hydrolase Family 18"/>
</dbReference>
<dbReference type="BRENDA" id="3.2.1.96">
    <property type="organism ID" value="6076"/>
</dbReference>
<dbReference type="EvolutionaryTrace" id="P04067"/>
<dbReference type="GO" id="GO:0005576">
    <property type="term" value="C:extracellular region"/>
    <property type="evidence" value="ECO:0007669"/>
    <property type="project" value="InterPro"/>
</dbReference>
<dbReference type="GO" id="GO:0033925">
    <property type="term" value="F:mannosyl-glycoprotein endo-beta-N-acetylglucosaminidase activity"/>
    <property type="evidence" value="ECO:0007669"/>
    <property type="project" value="UniProtKB-EC"/>
</dbReference>
<dbReference type="GO" id="GO:0005975">
    <property type="term" value="P:carbohydrate metabolic process"/>
    <property type="evidence" value="ECO:0007669"/>
    <property type="project" value="InterPro"/>
</dbReference>
<dbReference type="CDD" id="cd06542">
    <property type="entry name" value="GH18_EndoS-like"/>
    <property type="match status" value="1"/>
</dbReference>
<dbReference type="Gene3D" id="3.20.20.80">
    <property type="entry name" value="Glycosidases"/>
    <property type="match status" value="1"/>
</dbReference>
<dbReference type="InterPro" id="IPR016289">
    <property type="entry name" value="Endo-Fsp"/>
</dbReference>
<dbReference type="InterPro" id="IPR054861">
    <property type="entry name" value="Endoglyc_H"/>
</dbReference>
<dbReference type="InterPro" id="IPR001223">
    <property type="entry name" value="Glyco_hydro18_cat"/>
</dbReference>
<dbReference type="InterPro" id="IPR001579">
    <property type="entry name" value="Glyco_hydro_18_chit_AS"/>
</dbReference>
<dbReference type="InterPro" id="IPR017853">
    <property type="entry name" value="Glycoside_hydrolase_SF"/>
</dbReference>
<dbReference type="NCBIfam" id="NF045482">
    <property type="entry name" value="Endoglyc_H"/>
    <property type="match status" value="1"/>
</dbReference>
<dbReference type="Pfam" id="PF00704">
    <property type="entry name" value="Glyco_hydro_18"/>
    <property type="match status" value="1"/>
</dbReference>
<dbReference type="PIRSF" id="PIRSF001103">
    <property type="entry name" value="Endo-b-N-acetylglucosaminidase"/>
    <property type="match status" value="1"/>
</dbReference>
<dbReference type="SUPFAM" id="SSF51445">
    <property type="entry name" value="(Trans)glycosidases"/>
    <property type="match status" value="1"/>
</dbReference>
<dbReference type="PROSITE" id="PS01095">
    <property type="entry name" value="GH18_1"/>
    <property type="match status" value="1"/>
</dbReference>
<dbReference type="PROSITE" id="PS51910">
    <property type="entry name" value="GH18_2"/>
    <property type="match status" value="1"/>
</dbReference>
<keyword id="KW-0002">3D-structure</keyword>
<keyword id="KW-0903">Direct protein sequencing</keyword>
<keyword id="KW-0326">Glycosidase</keyword>
<keyword id="KW-0378">Hydrolase</keyword>
<keyword id="KW-0732">Signal</keyword>
<proteinExistence type="evidence at protein level"/>
<accession>P04067</accession>
<evidence type="ECO:0000255" key="1">
    <source>
        <dbReference type="PROSITE-ProRule" id="PRU01258"/>
    </source>
</evidence>
<evidence type="ECO:0000269" key="2">
    <source>
    </source>
</evidence>
<evidence type="ECO:0000269" key="3">
    <source>
    </source>
</evidence>
<evidence type="ECO:0000269" key="4">
    <source>
    </source>
</evidence>
<evidence type="ECO:0000305" key="5"/>
<evidence type="ECO:0000305" key="6">
    <source>
    </source>
</evidence>
<evidence type="ECO:0007829" key="7">
    <source>
        <dbReference type="PDB" id="1C8X"/>
    </source>
</evidence>
<evidence type="ECO:0007829" key="8">
    <source>
        <dbReference type="PDB" id="1C93"/>
    </source>
</evidence>
<evidence type="ECO:0007829" key="9">
    <source>
        <dbReference type="PDB" id="1EDT"/>
    </source>
</evidence>
<protein>
    <recommendedName>
        <fullName>Endo-beta-N-acetylglucosaminidase H</fullName>
        <ecNumber>3.2.1.96</ecNumber>
    </recommendedName>
    <alternativeName>
        <fullName>DI-N-acetylchitobiosyl beta-N-acetylglucosaminidase H</fullName>
    </alternativeName>
    <alternativeName>
        <fullName>Endoglycosidase H</fullName>
        <shortName>Endo H</shortName>
    </alternativeName>
    <alternativeName>
        <fullName>Mannosyl-glycoprotein endo-beta-N-acetyl-glucosaminidase H</fullName>
    </alternativeName>
</protein>